<reference key="1">
    <citation type="journal article" date="2005" name="J. Bacteriol.">
        <title>Whole-genome sequencing of Staphylococcus haemolyticus uncovers the extreme plasticity of its genome and the evolution of human-colonizing staphylococcal species.</title>
        <authorList>
            <person name="Takeuchi F."/>
            <person name="Watanabe S."/>
            <person name="Baba T."/>
            <person name="Yuzawa H."/>
            <person name="Ito T."/>
            <person name="Morimoto Y."/>
            <person name="Kuroda M."/>
            <person name="Cui L."/>
            <person name="Takahashi M."/>
            <person name="Ankai A."/>
            <person name="Baba S."/>
            <person name="Fukui S."/>
            <person name="Lee J.C."/>
            <person name="Hiramatsu K."/>
        </authorList>
    </citation>
    <scope>NUCLEOTIDE SEQUENCE [LARGE SCALE GENOMIC DNA]</scope>
    <source>
        <strain>JCSC1435</strain>
    </source>
</reference>
<dbReference type="EMBL" id="AP006716">
    <property type="protein sequence ID" value="BAE04799.1"/>
    <property type="molecule type" value="Genomic_DNA"/>
</dbReference>
<dbReference type="RefSeq" id="WP_011275785.1">
    <property type="nucleotide sequence ID" value="NC_007168.1"/>
</dbReference>
<dbReference type="SMR" id="Q4L6C6"/>
<dbReference type="KEGG" id="sha:SH1490"/>
<dbReference type="eggNOG" id="COG0745">
    <property type="taxonomic scope" value="Bacteria"/>
</dbReference>
<dbReference type="HOGENOM" id="CLU_000445_30_1_9"/>
<dbReference type="OrthoDB" id="9790442at2"/>
<dbReference type="Proteomes" id="UP000000543">
    <property type="component" value="Chromosome"/>
</dbReference>
<dbReference type="GO" id="GO:0005829">
    <property type="term" value="C:cytosol"/>
    <property type="evidence" value="ECO:0007669"/>
    <property type="project" value="TreeGrafter"/>
</dbReference>
<dbReference type="GO" id="GO:0032993">
    <property type="term" value="C:protein-DNA complex"/>
    <property type="evidence" value="ECO:0007669"/>
    <property type="project" value="TreeGrafter"/>
</dbReference>
<dbReference type="GO" id="GO:0000156">
    <property type="term" value="F:phosphorelay response regulator activity"/>
    <property type="evidence" value="ECO:0007669"/>
    <property type="project" value="TreeGrafter"/>
</dbReference>
<dbReference type="GO" id="GO:0000976">
    <property type="term" value="F:transcription cis-regulatory region binding"/>
    <property type="evidence" value="ECO:0007669"/>
    <property type="project" value="TreeGrafter"/>
</dbReference>
<dbReference type="GO" id="GO:0006355">
    <property type="term" value="P:regulation of DNA-templated transcription"/>
    <property type="evidence" value="ECO:0007669"/>
    <property type="project" value="InterPro"/>
</dbReference>
<dbReference type="CDD" id="cd00383">
    <property type="entry name" value="trans_reg_C"/>
    <property type="match status" value="1"/>
</dbReference>
<dbReference type="FunFam" id="3.40.50.2300:FF:000001">
    <property type="entry name" value="DNA-binding response regulator PhoB"/>
    <property type="match status" value="1"/>
</dbReference>
<dbReference type="FunFam" id="1.10.10.10:FF:000005">
    <property type="entry name" value="Two-component system response regulator"/>
    <property type="match status" value="1"/>
</dbReference>
<dbReference type="Gene3D" id="3.40.50.2300">
    <property type="match status" value="1"/>
</dbReference>
<dbReference type="Gene3D" id="6.10.250.690">
    <property type="match status" value="1"/>
</dbReference>
<dbReference type="Gene3D" id="1.10.10.10">
    <property type="entry name" value="Winged helix-like DNA-binding domain superfamily/Winged helix DNA-binding domain"/>
    <property type="match status" value="1"/>
</dbReference>
<dbReference type="InterPro" id="IPR011006">
    <property type="entry name" value="CheY-like_superfamily"/>
</dbReference>
<dbReference type="InterPro" id="IPR001867">
    <property type="entry name" value="OmpR/PhoB-type_DNA-bd"/>
</dbReference>
<dbReference type="InterPro" id="IPR016032">
    <property type="entry name" value="Sig_transdc_resp-reg_C-effctor"/>
</dbReference>
<dbReference type="InterPro" id="IPR001789">
    <property type="entry name" value="Sig_transdc_resp-reg_receiver"/>
</dbReference>
<dbReference type="InterPro" id="IPR039420">
    <property type="entry name" value="WalR-like"/>
</dbReference>
<dbReference type="InterPro" id="IPR036388">
    <property type="entry name" value="WH-like_DNA-bd_sf"/>
</dbReference>
<dbReference type="PANTHER" id="PTHR48111">
    <property type="entry name" value="REGULATOR OF RPOS"/>
    <property type="match status" value="1"/>
</dbReference>
<dbReference type="PANTHER" id="PTHR48111:SF22">
    <property type="entry name" value="REGULATOR OF RPOS"/>
    <property type="match status" value="1"/>
</dbReference>
<dbReference type="Pfam" id="PF00072">
    <property type="entry name" value="Response_reg"/>
    <property type="match status" value="1"/>
</dbReference>
<dbReference type="Pfam" id="PF00486">
    <property type="entry name" value="Trans_reg_C"/>
    <property type="match status" value="1"/>
</dbReference>
<dbReference type="SMART" id="SM00448">
    <property type="entry name" value="REC"/>
    <property type="match status" value="1"/>
</dbReference>
<dbReference type="SMART" id="SM00862">
    <property type="entry name" value="Trans_reg_C"/>
    <property type="match status" value="1"/>
</dbReference>
<dbReference type="SUPFAM" id="SSF46894">
    <property type="entry name" value="C-terminal effector domain of the bipartite response regulators"/>
    <property type="match status" value="1"/>
</dbReference>
<dbReference type="SUPFAM" id="SSF52172">
    <property type="entry name" value="CheY-like"/>
    <property type="match status" value="1"/>
</dbReference>
<dbReference type="PROSITE" id="PS51755">
    <property type="entry name" value="OMPR_PHOB"/>
    <property type="match status" value="1"/>
</dbReference>
<dbReference type="PROSITE" id="PS50110">
    <property type="entry name" value="RESPONSE_REGULATORY"/>
    <property type="match status" value="1"/>
</dbReference>
<protein>
    <recommendedName>
        <fullName>Response regulator ArlR</fullName>
    </recommendedName>
</protein>
<name>ARLR_STAHJ</name>
<gene>
    <name type="primary">arlR</name>
    <name type="ordered locus">SH1490</name>
</gene>
<accession>Q4L6C6</accession>
<feature type="chain" id="PRO_0000293445" description="Response regulator ArlR">
    <location>
        <begin position="1"/>
        <end position="219"/>
    </location>
</feature>
<feature type="domain" description="Response regulatory" evidence="2">
    <location>
        <begin position="3"/>
        <end position="116"/>
    </location>
</feature>
<feature type="DNA-binding region" description="OmpR/PhoB-type" evidence="3">
    <location>
        <begin position="122"/>
        <end position="219"/>
    </location>
</feature>
<feature type="modified residue" description="4-aspartylphosphate" evidence="2">
    <location>
        <position position="52"/>
    </location>
</feature>
<organism>
    <name type="scientific">Staphylococcus haemolyticus (strain JCSC1435)</name>
    <dbReference type="NCBI Taxonomy" id="279808"/>
    <lineage>
        <taxon>Bacteria</taxon>
        <taxon>Bacillati</taxon>
        <taxon>Bacillota</taxon>
        <taxon>Bacilli</taxon>
        <taxon>Bacillales</taxon>
        <taxon>Staphylococcaceae</taxon>
        <taxon>Staphylococcus</taxon>
    </lineage>
</organism>
<proteinExistence type="inferred from homology"/>
<sequence length="219" mass="25436">MTNILIVEDEQNLARFLELELTHDNYSVDIEYEGQAGLDKALSNNYDLIILDLMLPNINGLEICRRVRQEQSTPIIIITAKSDTYDKVTGLDYGADDYIVKPFEIEELFARIRAVLRRQPQKDIIDINGIKIDVDAFNVTINGEQLDFTKTEYDLLYLLATNRNRVLQREQILDHVWGYDSEVETNVVDVYIRYLRNKLKPYGKDKTIETVRGVGYVIR</sequence>
<evidence type="ECO:0000250" key="1"/>
<evidence type="ECO:0000255" key="2">
    <source>
        <dbReference type="PROSITE-ProRule" id="PRU00169"/>
    </source>
</evidence>
<evidence type="ECO:0000255" key="3">
    <source>
        <dbReference type="PROSITE-ProRule" id="PRU01091"/>
    </source>
</evidence>
<comment type="function">
    <text evidence="1">Member of the two-component regulatory system ArlS/ArlR.</text>
</comment>
<comment type="subcellular location">
    <subcellularLocation>
        <location evidence="1">Cytoplasm</location>
    </subcellularLocation>
</comment>
<comment type="PTM">
    <text evidence="1">Phosphorylated by ArlS.</text>
</comment>
<keyword id="KW-0963">Cytoplasm</keyword>
<keyword id="KW-0238">DNA-binding</keyword>
<keyword id="KW-0597">Phosphoprotein</keyword>
<keyword id="KW-0804">Transcription</keyword>
<keyword id="KW-0805">Transcription regulation</keyword>
<keyword id="KW-0902">Two-component regulatory system</keyword>